<feature type="chain" id="PRO_1000120603" description="Small ribosomal subunit protein bS21">
    <location>
        <begin position="1"/>
        <end position="58"/>
    </location>
</feature>
<feature type="region of interest" description="Disordered" evidence="2">
    <location>
        <begin position="35"/>
        <end position="58"/>
    </location>
</feature>
<feature type="compositionally biased region" description="Basic residues" evidence="2">
    <location>
        <begin position="43"/>
        <end position="58"/>
    </location>
</feature>
<evidence type="ECO:0000255" key="1">
    <source>
        <dbReference type="HAMAP-Rule" id="MF_00358"/>
    </source>
</evidence>
<evidence type="ECO:0000256" key="2">
    <source>
        <dbReference type="SAM" id="MobiDB-lite"/>
    </source>
</evidence>
<evidence type="ECO:0000305" key="3"/>
<accession>B2TM09</accession>
<reference key="1">
    <citation type="submission" date="2008-04" db="EMBL/GenBank/DDBJ databases">
        <title>Complete sequence of Clostridium botulinum strain Eklund.</title>
        <authorList>
            <person name="Brinkac L.M."/>
            <person name="Brown J.L."/>
            <person name="Bruce D."/>
            <person name="Detter C."/>
            <person name="Munk C."/>
            <person name="Smith L.A."/>
            <person name="Smith T.J."/>
            <person name="Sutton G."/>
            <person name="Brettin T.S."/>
        </authorList>
    </citation>
    <scope>NUCLEOTIDE SEQUENCE [LARGE SCALE GENOMIC DNA]</scope>
    <source>
        <strain>Eklund 17B / Type B</strain>
    </source>
</reference>
<protein>
    <recommendedName>
        <fullName evidence="1">Small ribosomal subunit protein bS21</fullName>
    </recommendedName>
    <alternativeName>
        <fullName evidence="3">30S ribosomal protein S21</fullName>
    </alternativeName>
</protein>
<name>RS21_CLOBB</name>
<keyword id="KW-0687">Ribonucleoprotein</keyword>
<keyword id="KW-0689">Ribosomal protein</keyword>
<organism>
    <name type="scientific">Clostridium botulinum (strain Eklund 17B / Type B)</name>
    <dbReference type="NCBI Taxonomy" id="935198"/>
    <lineage>
        <taxon>Bacteria</taxon>
        <taxon>Bacillati</taxon>
        <taxon>Bacillota</taxon>
        <taxon>Clostridia</taxon>
        <taxon>Eubacteriales</taxon>
        <taxon>Clostridiaceae</taxon>
        <taxon>Clostridium</taxon>
    </lineage>
</organism>
<dbReference type="EMBL" id="CP001056">
    <property type="protein sequence ID" value="ACD24322.1"/>
    <property type="molecule type" value="Genomic_DNA"/>
</dbReference>
<dbReference type="SMR" id="B2TM09"/>
<dbReference type="KEGG" id="cbk:CLL_A0899"/>
<dbReference type="PATRIC" id="fig|935198.13.peg.849"/>
<dbReference type="HOGENOM" id="CLU_159258_1_2_9"/>
<dbReference type="Proteomes" id="UP000001195">
    <property type="component" value="Chromosome"/>
</dbReference>
<dbReference type="GO" id="GO:1990904">
    <property type="term" value="C:ribonucleoprotein complex"/>
    <property type="evidence" value="ECO:0007669"/>
    <property type="project" value="UniProtKB-KW"/>
</dbReference>
<dbReference type="GO" id="GO:0005840">
    <property type="term" value="C:ribosome"/>
    <property type="evidence" value="ECO:0007669"/>
    <property type="project" value="UniProtKB-KW"/>
</dbReference>
<dbReference type="GO" id="GO:0003735">
    <property type="term" value="F:structural constituent of ribosome"/>
    <property type="evidence" value="ECO:0007669"/>
    <property type="project" value="InterPro"/>
</dbReference>
<dbReference type="GO" id="GO:0006412">
    <property type="term" value="P:translation"/>
    <property type="evidence" value="ECO:0007669"/>
    <property type="project" value="UniProtKB-UniRule"/>
</dbReference>
<dbReference type="Gene3D" id="1.20.5.1150">
    <property type="entry name" value="Ribosomal protein S8"/>
    <property type="match status" value="1"/>
</dbReference>
<dbReference type="HAMAP" id="MF_00358">
    <property type="entry name" value="Ribosomal_bS21"/>
    <property type="match status" value="1"/>
</dbReference>
<dbReference type="InterPro" id="IPR001911">
    <property type="entry name" value="Ribosomal_bS21"/>
</dbReference>
<dbReference type="InterPro" id="IPR018278">
    <property type="entry name" value="Ribosomal_bS21_CS"/>
</dbReference>
<dbReference type="InterPro" id="IPR038380">
    <property type="entry name" value="Ribosomal_bS21_sf"/>
</dbReference>
<dbReference type="NCBIfam" id="TIGR00030">
    <property type="entry name" value="S21p"/>
    <property type="match status" value="1"/>
</dbReference>
<dbReference type="PANTHER" id="PTHR21109">
    <property type="entry name" value="MITOCHONDRIAL 28S RIBOSOMAL PROTEIN S21"/>
    <property type="match status" value="1"/>
</dbReference>
<dbReference type="PANTHER" id="PTHR21109:SF22">
    <property type="entry name" value="SMALL RIBOSOMAL SUBUNIT PROTEIN BS21"/>
    <property type="match status" value="1"/>
</dbReference>
<dbReference type="Pfam" id="PF01165">
    <property type="entry name" value="Ribosomal_S21"/>
    <property type="match status" value="1"/>
</dbReference>
<dbReference type="PRINTS" id="PR00976">
    <property type="entry name" value="RIBOSOMALS21"/>
</dbReference>
<dbReference type="PROSITE" id="PS01181">
    <property type="entry name" value="RIBOSOMAL_S21"/>
    <property type="match status" value="1"/>
</dbReference>
<comment type="similarity">
    <text evidence="1">Belongs to the bacterial ribosomal protein bS21 family.</text>
</comment>
<sequence length="58" mass="6834">MSEIKVGENETLESALRRFKKKCARAGVLSEVRKREHYEKPSVKKKKKSEAARKRKFK</sequence>
<gene>
    <name evidence="1" type="primary">rpsU</name>
    <name type="ordered locus">CLL_A0899</name>
</gene>
<proteinExistence type="inferred from homology"/>